<name>KAD_PARDP</name>
<proteinExistence type="inferred from homology"/>
<reference key="1">
    <citation type="submission" date="2006-12" db="EMBL/GenBank/DDBJ databases">
        <title>Complete sequence of chromosome 1 of Paracoccus denitrificans PD1222.</title>
        <authorList>
            <person name="Copeland A."/>
            <person name="Lucas S."/>
            <person name="Lapidus A."/>
            <person name="Barry K."/>
            <person name="Detter J.C."/>
            <person name="Glavina del Rio T."/>
            <person name="Hammon N."/>
            <person name="Israni S."/>
            <person name="Dalin E."/>
            <person name="Tice H."/>
            <person name="Pitluck S."/>
            <person name="Munk A.C."/>
            <person name="Brettin T."/>
            <person name="Bruce D."/>
            <person name="Han C."/>
            <person name="Tapia R."/>
            <person name="Gilna P."/>
            <person name="Schmutz J."/>
            <person name="Larimer F."/>
            <person name="Land M."/>
            <person name="Hauser L."/>
            <person name="Kyrpides N."/>
            <person name="Lykidis A."/>
            <person name="Spiro S."/>
            <person name="Richardson D.J."/>
            <person name="Moir J.W.B."/>
            <person name="Ferguson S.J."/>
            <person name="van Spanning R.J.M."/>
            <person name="Richardson P."/>
        </authorList>
    </citation>
    <scope>NUCLEOTIDE SEQUENCE [LARGE SCALE GENOMIC DNA]</scope>
    <source>
        <strain>Pd 1222</strain>
    </source>
</reference>
<evidence type="ECO:0000255" key="1">
    <source>
        <dbReference type="HAMAP-Rule" id="MF_00235"/>
    </source>
</evidence>
<protein>
    <recommendedName>
        <fullName evidence="1">Adenylate kinase</fullName>
        <shortName evidence="1">AK</shortName>
        <ecNumber evidence="1">2.7.4.3</ecNumber>
    </recommendedName>
    <alternativeName>
        <fullName evidence="1">ATP-AMP transphosphorylase</fullName>
    </alternativeName>
    <alternativeName>
        <fullName evidence="1">ATP:AMP phosphotransferase</fullName>
    </alternativeName>
    <alternativeName>
        <fullName evidence="1">Adenylate monophosphate kinase</fullName>
    </alternativeName>
</protein>
<keyword id="KW-0067">ATP-binding</keyword>
<keyword id="KW-0963">Cytoplasm</keyword>
<keyword id="KW-0418">Kinase</keyword>
<keyword id="KW-0479">Metal-binding</keyword>
<keyword id="KW-0545">Nucleotide biosynthesis</keyword>
<keyword id="KW-0547">Nucleotide-binding</keyword>
<keyword id="KW-1185">Reference proteome</keyword>
<keyword id="KW-0808">Transferase</keyword>
<keyword id="KW-0862">Zinc</keyword>
<gene>
    <name evidence="1" type="primary">adk</name>
    <name type="ordered locus">Pden_0781</name>
</gene>
<comment type="function">
    <text evidence="1">Catalyzes the reversible transfer of the terminal phosphate group between ATP and AMP. Plays an important role in cellular energy homeostasis and in adenine nucleotide metabolism.</text>
</comment>
<comment type="catalytic activity">
    <reaction evidence="1">
        <text>AMP + ATP = 2 ADP</text>
        <dbReference type="Rhea" id="RHEA:12973"/>
        <dbReference type="ChEBI" id="CHEBI:30616"/>
        <dbReference type="ChEBI" id="CHEBI:456215"/>
        <dbReference type="ChEBI" id="CHEBI:456216"/>
        <dbReference type="EC" id="2.7.4.3"/>
    </reaction>
</comment>
<comment type="pathway">
    <text evidence="1">Purine metabolism; AMP biosynthesis via salvage pathway; AMP from ADP: step 1/1.</text>
</comment>
<comment type="subunit">
    <text evidence="1">Monomer.</text>
</comment>
<comment type="subcellular location">
    <subcellularLocation>
        <location evidence="1">Cytoplasm</location>
    </subcellularLocation>
</comment>
<comment type="domain">
    <text evidence="1">Consists of three domains, a large central CORE domain and two small peripheral domains, NMPbind and LID, which undergo movements during catalysis. The LID domain closes over the site of phosphoryl transfer upon ATP binding. Assembling and dissambling the active center during each catalytic cycle provides an effective means to prevent ATP hydrolysis. Some bacteria have evolved a zinc-coordinating structure that stabilizes the LID domain.</text>
</comment>
<comment type="similarity">
    <text evidence="1">Belongs to the adenylate kinase family.</text>
</comment>
<accession>A1B049</accession>
<sequence length="218" mass="23811">MAINIILLGPPGAGKGTQARRLIDERGLVQLSTGDMLREARSSGTEMGKRVAEVMDRGELVTDEIVIGLIREKLGQGGKGFIFDGFPRTLAQADALQALMAEMDQRIDAVIEMRVDDAALVSRISGRFTCGNCGEVYHDVTKPTKEPGKCDVCGSTDLRRRADDNEESLKTRLMEYYKKTSPLIGYYYVKGNLNPVDGLAEIDEVAAQVAKVMDKIPA</sequence>
<feature type="chain" id="PRO_1000021753" description="Adenylate kinase">
    <location>
        <begin position="1"/>
        <end position="218"/>
    </location>
</feature>
<feature type="region of interest" description="NMP" evidence="1">
    <location>
        <begin position="32"/>
        <end position="61"/>
    </location>
</feature>
<feature type="region of interest" description="LID" evidence="1">
    <location>
        <begin position="126"/>
        <end position="164"/>
    </location>
</feature>
<feature type="binding site" evidence="1">
    <location>
        <begin position="12"/>
        <end position="17"/>
    </location>
    <ligand>
        <name>ATP</name>
        <dbReference type="ChEBI" id="CHEBI:30616"/>
    </ligand>
</feature>
<feature type="binding site" evidence="1">
    <location>
        <position position="33"/>
    </location>
    <ligand>
        <name>AMP</name>
        <dbReference type="ChEBI" id="CHEBI:456215"/>
    </ligand>
</feature>
<feature type="binding site" evidence="1">
    <location>
        <position position="38"/>
    </location>
    <ligand>
        <name>AMP</name>
        <dbReference type="ChEBI" id="CHEBI:456215"/>
    </ligand>
</feature>
<feature type="binding site" evidence="1">
    <location>
        <begin position="59"/>
        <end position="61"/>
    </location>
    <ligand>
        <name>AMP</name>
        <dbReference type="ChEBI" id="CHEBI:456215"/>
    </ligand>
</feature>
<feature type="binding site" evidence="1">
    <location>
        <begin position="85"/>
        <end position="88"/>
    </location>
    <ligand>
        <name>AMP</name>
        <dbReference type="ChEBI" id="CHEBI:456215"/>
    </ligand>
</feature>
<feature type="binding site" evidence="1">
    <location>
        <position position="92"/>
    </location>
    <ligand>
        <name>AMP</name>
        <dbReference type="ChEBI" id="CHEBI:456215"/>
    </ligand>
</feature>
<feature type="binding site" evidence="1">
    <location>
        <position position="127"/>
    </location>
    <ligand>
        <name>ATP</name>
        <dbReference type="ChEBI" id="CHEBI:30616"/>
    </ligand>
</feature>
<feature type="binding site" evidence="1">
    <location>
        <position position="130"/>
    </location>
    <ligand>
        <name>Zn(2+)</name>
        <dbReference type="ChEBI" id="CHEBI:29105"/>
        <note>structural</note>
    </ligand>
</feature>
<feature type="binding site" evidence="1">
    <location>
        <position position="133"/>
    </location>
    <ligand>
        <name>Zn(2+)</name>
        <dbReference type="ChEBI" id="CHEBI:29105"/>
        <note>structural</note>
    </ligand>
</feature>
<feature type="binding site" evidence="1">
    <location>
        <begin position="136"/>
        <end position="137"/>
    </location>
    <ligand>
        <name>ATP</name>
        <dbReference type="ChEBI" id="CHEBI:30616"/>
    </ligand>
</feature>
<feature type="binding site" evidence="1">
    <location>
        <position position="150"/>
    </location>
    <ligand>
        <name>Zn(2+)</name>
        <dbReference type="ChEBI" id="CHEBI:29105"/>
        <note>structural</note>
    </ligand>
</feature>
<feature type="binding site" evidence="1">
    <location>
        <position position="153"/>
    </location>
    <ligand>
        <name>Zn(2+)</name>
        <dbReference type="ChEBI" id="CHEBI:29105"/>
        <note>structural</note>
    </ligand>
</feature>
<feature type="binding site" evidence="1">
    <location>
        <position position="161"/>
    </location>
    <ligand>
        <name>AMP</name>
        <dbReference type="ChEBI" id="CHEBI:456215"/>
    </ligand>
</feature>
<feature type="binding site" evidence="1">
    <location>
        <position position="172"/>
    </location>
    <ligand>
        <name>AMP</name>
        <dbReference type="ChEBI" id="CHEBI:456215"/>
    </ligand>
</feature>
<feature type="binding site" evidence="1">
    <location>
        <position position="200"/>
    </location>
    <ligand>
        <name>ATP</name>
        <dbReference type="ChEBI" id="CHEBI:30616"/>
    </ligand>
</feature>
<organism>
    <name type="scientific">Paracoccus denitrificans (strain Pd 1222)</name>
    <dbReference type="NCBI Taxonomy" id="318586"/>
    <lineage>
        <taxon>Bacteria</taxon>
        <taxon>Pseudomonadati</taxon>
        <taxon>Pseudomonadota</taxon>
        <taxon>Alphaproteobacteria</taxon>
        <taxon>Rhodobacterales</taxon>
        <taxon>Paracoccaceae</taxon>
        <taxon>Paracoccus</taxon>
    </lineage>
</organism>
<dbReference type="EC" id="2.7.4.3" evidence="1"/>
<dbReference type="EMBL" id="CP000489">
    <property type="protein sequence ID" value="ABL68893.1"/>
    <property type="molecule type" value="Genomic_DNA"/>
</dbReference>
<dbReference type="RefSeq" id="WP_011747121.1">
    <property type="nucleotide sequence ID" value="NC_008686.1"/>
</dbReference>
<dbReference type="SMR" id="A1B049"/>
<dbReference type="STRING" id="318586.Pden_0781"/>
<dbReference type="EnsemblBacteria" id="ABL68893">
    <property type="protein sequence ID" value="ABL68893"/>
    <property type="gene ID" value="Pden_0781"/>
</dbReference>
<dbReference type="GeneID" id="93452005"/>
<dbReference type="KEGG" id="pde:Pden_0781"/>
<dbReference type="eggNOG" id="COG0563">
    <property type="taxonomic scope" value="Bacteria"/>
</dbReference>
<dbReference type="HOGENOM" id="CLU_032354_1_2_5"/>
<dbReference type="OrthoDB" id="9805030at2"/>
<dbReference type="UniPathway" id="UPA00588">
    <property type="reaction ID" value="UER00649"/>
</dbReference>
<dbReference type="Proteomes" id="UP000000361">
    <property type="component" value="Chromosome 1"/>
</dbReference>
<dbReference type="GO" id="GO:0005737">
    <property type="term" value="C:cytoplasm"/>
    <property type="evidence" value="ECO:0007669"/>
    <property type="project" value="UniProtKB-SubCell"/>
</dbReference>
<dbReference type="GO" id="GO:0004017">
    <property type="term" value="F:adenylate kinase activity"/>
    <property type="evidence" value="ECO:0007669"/>
    <property type="project" value="UniProtKB-UniRule"/>
</dbReference>
<dbReference type="GO" id="GO:0005524">
    <property type="term" value="F:ATP binding"/>
    <property type="evidence" value="ECO:0007669"/>
    <property type="project" value="UniProtKB-UniRule"/>
</dbReference>
<dbReference type="GO" id="GO:0008270">
    <property type="term" value="F:zinc ion binding"/>
    <property type="evidence" value="ECO:0007669"/>
    <property type="project" value="UniProtKB-UniRule"/>
</dbReference>
<dbReference type="GO" id="GO:0044209">
    <property type="term" value="P:AMP salvage"/>
    <property type="evidence" value="ECO:0007669"/>
    <property type="project" value="UniProtKB-UniRule"/>
</dbReference>
<dbReference type="CDD" id="cd01428">
    <property type="entry name" value="ADK"/>
    <property type="match status" value="1"/>
</dbReference>
<dbReference type="FunFam" id="3.40.50.300:FF:000106">
    <property type="entry name" value="Adenylate kinase mitochondrial"/>
    <property type="match status" value="1"/>
</dbReference>
<dbReference type="Gene3D" id="3.40.50.300">
    <property type="entry name" value="P-loop containing nucleotide triphosphate hydrolases"/>
    <property type="match status" value="1"/>
</dbReference>
<dbReference type="HAMAP" id="MF_00235">
    <property type="entry name" value="Adenylate_kinase_Adk"/>
    <property type="match status" value="1"/>
</dbReference>
<dbReference type="InterPro" id="IPR006259">
    <property type="entry name" value="Adenyl_kin_sub"/>
</dbReference>
<dbReference type="InterPro" id="IPR000850">
    <property type="entry name" value="Adenylat/UMP-CMP_kin"/>
</dbReference>
<dbReference type="InterPro" id="IPR033690">
    <property type="entry name" value="Adenylat_kinase_CS"/>
</dbReference>
<dbReference type="InterPro" id="IPR007862">
    <property type="entry name" value="Adenylate_kinase_lid-dom"/>
</dbReference>
<dbReference type="InterPro" id="IPR027417">
    <property type="entry name" value="P-loop_NTPase"/>
</dbReference>
<dbReference type="NCBIfam" id="TIGR01351">
    <property type="entry name" value="adk"/>
    <property type="match status" value="1"/>
</dbReference>
<dbReference type="NCBIfam" id="NF001380">
    <property type="entry name" value="PRK00279.1-2"/>
    <property type="match status" value="1"/>
</dbReference>
<dbReference type="NCBIfam" id="NF001381">
    <property type="entry name" value="PRK00279.1-3"/>
    <property type="match status" value="1"/>
</dbReference>
<dbReference type="NCBIfam" id="NF011100">
    <property type="entry name" value="PRK14527.1"/>
    <property type="match status" value="1"/>
</dbReference>
<dbReference type="NCBIfam" id="NF011105">
    <property type="entry name" value="PRK14532.1"/>
    <property type="match status" value="1"/>
</dbReference>
<dbReference type="PANTHER" id="PTHR23359">
    <property type="entry name" value="NUCLEOTIDE KINASE"/>
    <property type="match status" value="1"/>
</dbReference>
<dbReference type="Pfam" id="PF00406">
    <property type="entry name" value="ADK"/>
    <property type="match status" value="1"/>
</dbReference>
<dbReference type="Pfam" id="PF05191">
    <property type="entry name" value="ADK_lid"/>
    <property type="match status" value="1"/>
</dbReference>
<dbReference type="PRINTS" id="PR00094">
    <property type="entry name" value="ADENYLTKNASE"/>
</dbReference>
<dbReference type="SUPFAM" id="SSF52540">
    <property type="entry name" value="P-loop containing nucleoside triphosphate hydrolases"/>
    <property type="match status" value="1"/>
</dbReference>
<dbReference type="PROSITE" id="PS00113">
    <property type="entry name" value="ADENYLATE_KINASE"/>
    <property type="match status" value="1"/>
</dbReference>